<organism>
    <name type="scientific">Danio rerio</name>
    <name type="common">Zebrafish</name>
    <name type="synonym">Brachydanio rerio</name>
    <dbReference type="NCBI Taxonomy" id="7955"/>
    <lineage>
        <taxon>Eukaryota</taxon>
        <taxon>Metazoa</taxon>
        <taxon>Chordata</taxon>
        <taxon>Craniata</taxon>
        <taxon>Vertebrata</taxon>
        <taxon>Euteleostomi</taxon>
        <taxon>Actinopterygii</taxon>
        <taxon>Neopterygii</taxon>
        <taxon>Teleostei</taxon>
        <taxon>Ostariophysi</taxon>
        <taxon>Cypriniformes</taxon>
        <taxon>Danionidae</taxon>
        <taxon>Danioninae</taxon>
        <taxon>Danio</taxon>
    </lineage>
</organism>
<feature type="chain" id="PRO_0000304793" description="GPN-loop GTPase 3">
    <location>
        <begin position="1"/>
        <end position="285"/>
    </location>
</feature>
<feature type="region of interest" description="Disordered" evidence="3">
    <location>
        <begin position="262"/>
        <end position="285"/>
    </location>
</feature>
<feature type="short sequence motif" description="Gly-Pro-Asn (GPN)-loop; involved in dimer interface" evidence="2">
    <location>
        <begin position="72"/>
        <end position="74"/>
    </location>
</feature>
<feature type="binding site" evidence="2">
    <location>
        <begin position="13"/>
        <end position="18"/>
    </location>
    <ligand>
        <name>GTP</name>
        <dbReference type="ChEBI" id="CHEBI:37565"/>
    </ligand>
</feature>
<feature type="binding site" evidence="2">
    <location>
        <begin position="174"/>
        <end position="177"/>
    </location>
    <ligand>
        <name>GTP</name>
        <dbReference type="ChEBI" id="CHEBI:37565"/>
    </ligand>
</feature>
<feature type="site" description="Stabilizes the phosphate intermediate; shared with dimeric partner" evidence="2">
    <location>
        <position position="74"/>
    </location>
</feature>
<feature type="sequence conflict" description="In Ref. 1; CAE50613." evidence="4" ref="1">
    <original>I</original>
    <variation>M</variation>
    <location>
        <position position="51"/>
    </location>
</feature>
<comment type="function">
    <text evidence="1">Small GTPase required for proper localization of RNA polymerase II (RNAPII). May act at an RNAP assembly step prior to nuclear import.</text>
</comment>
<comment type="subunit">
    <text evidence="1">Heterodimer with gpn1. Binds to RNA polymerase II (RNAPII).</text>
</comment>
<comment type="similarity">
    <text evidence="4">Belongs to the GPN-loop GTPase family.</text>
</comment>
<proteinExistence type="evidence at transcript level"/>
<evidence type="ECO:0000250" key="1">
    <source>
        <dbReference type="UniProtKB" id="Q9UHW5"/>
    </source>
</evidence>
<evidence type="ECO:0000250" key="2">
    <source>
        <dbReference type="UniProtKB" id="Q9UYR9"/>
    </source>
</evidence>
<evidence type="ECO:0000256" key="3">
    <source>
        <dbReference type="SAM" id="MobiDB-lite"/>
    </source>
</evidence>
<evidence type="ECO:0000305" key="4"/>
<sequence>MPRYAQLVMGPAGSGKSTYCATMLEHCQALNRSVQVVNLDPAAEHFEYPVIADIRELIQVDDVMEDDSLRFGPNGGLIFCMEYFSNNFDWLEESLGHVEDDYILFDCPGQIELYTHLPVMKQLVEQLQQWEFRVCGVFLVDSQFMVETFKFISGVMAALSAMVMLEIPQVNIMTKMDLLSPKAKKEIEKYLDPDMYSMMEDNSVALRSKKFSKLTKAICGLIDDYSMVRFLPFDRTDEEGINIVLQHIDFSIQYGEDLEVKEPKEVDEEPSNSNFDAFFQDTADS</sequence>
<accession>Q6ZM63</accession>
<accession>Q5U3M6</accession>
<protein>
    <recommendedName>
        <fullName evidence="1">GPN-loop GTPase 3</fullName>
    </recommendedName>
    <alternativeName>
        <fullName evidence="1">ATP-binding domain 1 family member C</fullName>
    </alternativeName>
</protein>
<keyword id="KW-0342">GTP-binding</keyword>
<keyword id="KW-0378">Hydrolase</keyword>
<keyword id="KW-0547">Nucleotide-binding</keyword>
<keyword id="KW-1185">Reference proteome</keyword>
<gene>
    <name evidence="1" type="primary">gpn3</name>
    <name evidence="1" type="synonym">atpbd1c</name>
    <name type="ORF">si:dkey-83d9.3</name>
</gene>
<reference key="1">
    <citation type="journal article" date="2013" name="Nature">
        <title>The zebrafish reference genome sequence and its relationship to the human genome.</title>
        <authorList>
            <person name="Howe K."/>
            <person name="Clark M.D."/>
            <person name="Torroja C.F."/>
            <person name="Torrance J."/>
            <person name="Berthelot C."/>
            <person name="Muffato M."/>
            <person name="Collins J.E."/>
            <person name="Humphray S."/>
            <person name="McLaren K."/>
            <person name="Matthews L."/>
            <person name="McLaren S."/>
            <person name="Sealy I."/>
            <person name="Caccamo M."/>
            <person name="Churcher C."/>
            <person name="Scott C."/>
            <person name="Barrett J.C."/>
            <person name="Koch R."/>
            <person name="Rauch G.J."/>
            <person name="White S."/>
            <person name="Chow W."/>
            <person name="Kilian B."/>
            <person name="Quintais L.T."/>
            <person name="Guerra-Assuncao J.A."/>
            <person name="Zhou Y."/>
            <person name="Gu Y."/>
            <person name="Yen J."/>
            <person name="Vogel J.H."/>
            <person name="Eyre T."/>
            <person name="Redmond S."/>
            <person name="Banerjee R."/>
            <person name="Chi J."/>
            <person name="Fu B."/>
            <person name="Langley E."/>
            <person name="Maguire S.F."/>
            <person name="Laird G.K."/>
            <person name="Lloyd D."/>
            <person name="Kenyon E."/>
            <person name="Donaldson S."/>
            <person name="Sehra H."/>
            <person name="Almeida-King J."/>
            <person name="Loveland J."/>
            <person name="Trevanion S."/>
            <person name="Jones M."/>
            <person name="Quail M."/>
            <person name="Willey D."/>
            <person name="Hunt A."/>
            <person name="Burton J."/>
            <person name="Sims S."/>
            <person name="McLay K."/>
            <person name="Plumb B."/>
            <person name="Davis J."/>
            <person name="Clee C."/>
            <person name="Oliver K."/>
            <person name="Clark R."/>
            <person name="Riddle C."/>
            <person name="Elliot D."/>
            <person name="Threadgold G."/>
            <person name="Harden G."/>
            <person name="Ware D."/>
            <person name="Begum S."/>
            <person name="Mortimore B."/>
            <person name="Kerry G."/>
            <person name="Heath P."/>
            <person name="Phillimore B."/>
            <person name="Tracey A."/>
            <person name="Corby N."/>
            <person name="Dunn M."/>
            <person name="Johnson C."/>
            <person name="Wood J."/>
            <person name="Clark S."/>
            <person name="Pelan S."/>
            <person name="Griffiths G."/>
            <person name="Smith M."/>
            <person name="Glithero R."/>
            <person name="Howden P."/>
            <person name="Barker N."/>
            <person name="Lloyd C."/>
            <person name="Stevens C."/>
            <person name="Harley J."/>
            <person name="Holt K."/>
            <person name="Panagiotidis G."/>
            <person name="Lovell J."/>
            <person name="Beasley H."/>
            <person name="Henderson C."/>
            <person name="Gordon D."/>
            <person name="Auger K."/>
            <person name="Wright D."/>
            <person name="Collins J."/>
            <person name="Raisen C."/>
            <person name="Dyer L."/>
            <person name="Leung K."/>
            <person name="Robertson L."/>
            <person name="Ambridge K."/>
            <person name="Leongamornlert D."/>
            <person name="McGuire S."/>
            <person name="Gilderthorp R."/>
            <person name="Griffiths C."/>
            <person name="Manthravadi D."/>
            <person name="Nichol S."/>
            <person name="Barker G."/>
            <person name="Whitehead S."/>
            <person name="Kay M."/>
            <person name="Brown J."/>
            <person name="Murnane C."/>
            <person name="Gray E."/>
            <person name="Humphries M."/>
            <person name="Sycamore N."/>
            <person name="Barker D."/>
            <person name="Saunders D."/>
            <person name="Wallis J."/>
            <person name="Babbage A."/>
            <person name="Hammond S."/>
            <person name="Mashreghi-Mohammadi M."/>
            <person name="Barr L."/>
            <person name="Martin S."/>
            <person name="Wray P."/>
            <person name="Ellington A."/>
            <person name="Matthews N."/>
            <person name="Ellwood M."/>
            <person name="Woodmansey R."/>
            <person name="Clark G."/>
            <person name="Cooper J."/>
            <person name="Tromans A."/>
            <person name="Grafham D."/>
            <person name="Skuce C."/>
            <person name="Pandian R."/>
            <person name="Andrews R."/>
            <person name="Harrison E."/>
            <person name="Kimberley A."/>
            <person name="Garnett J."/>
            <person name="Fosker N."/>
            <person name="Hall R."/>
            <person name="Garner P."/>
            <person name="Kelly D."/>
            <person name="Bird C."/>
            <person name="Palmer S."/>
            <person name="Gehring I."/>
            <person name="Berger A."/>
            <person name="Dooley C.M."/>
            <person name="Ersan-Urun Z."/>
            <person name="Eser C."/>
            <person name="Geiger H."/>
            <person name="Geisler M."/>
            <person name="Karotki L."/>
            <person name="Kirn A."/>
            <person name="Konantz J."/>
            <person name="Konantz M."/>
            <person name="Oberlander M."/>
            <person name="Rudolph-Geiger S."/>
            <person name="Teucke M."/>
            <person name="Lanz C."/>
            <person name="Raddatz G."/>
            <person name="Osoegawa K."/>
            <person name="Zhu B."/>
            <person name="Rapp A."/>
            <person name="Widaa S."/>
            <person name="Langford C."/>
            <person name="Yang F."/>
            <person name="Schuster S.C."/>
            <person name="Carter N.P."/>
            <person name="Harrow J."/>
            <person name="Ning Z."/>
            <person name="Herrero J."/>
            <person name="Searle S.M."/>
            <person name="Enright A."/>
            <person name="Geisler R."/>
            <person name="Plasterk R.H."/>
            <person name="Lee C."/>
            <person name="Westerfield M."/>
            <person name="de Jong P.J."/>
            <person name="Zon L.I."/>
            <person name="Postlethwait J.H."/>
            <person name="Nusslein-Volhard C."/>
            <person name="Hubbard T.J."/>
            <person name="Roest Crollius H."/>
            <person name="Rogers J."/>
            <person name="Stemple D.L."/>
        </authorList>
    </citation>
    <scope>NUCLEOTIDE SEQUENCE [LARGE SCALE GENOMIC DNA]</scope>
    <source>
        <strain>Tuebingen</strain>
    </source>
</reference>
<reference key="2">
    <citation type="submission" date="2004-11" db="EMBL/GenBank/DDBJ databases">
        <authorList>
            <consortium name="NIH - Zebrafish Gene Collection (ZGC) project"/>
        </authorList>
    </citation>
    <scope>NUCLEOTIDE SEQUENCE [LARGE SCALE MRNA]</scope>
</reference>
<dbReference type="EMBL" id="AL844518">
    <property type="protein sequence ID" value="CAE50613.1"/>
    <property type="molecule type" value="Genomic_DNA"/>
</dbReference>
<dbReference type="EMBL" id="BC085469">
    <property type="protein sequence ID" value="AAH85469.1"/>
    <property type="molecule type" value="mRNA"/>
</dbReference>
<dbReference type="RefSeq" id="NP_001007371.1">
    <property type="nucleotide sequence ID" value="NM_001007370.1"/>
</dbReference>
<dbReference type="SMR" id="Q6ZM63"/>
<dbReference type="FunCoup" id="Q6ZM63">
    <property type="interactions" value="2362"/>
</dbReference>
<dbReference type="STRING" id="7955.ENSDARP00000065754"/>
<dbReference type="PaxDb" id="7955-ENSDARP00000065754"/>
<dbReference type="GeneID" id="100000326"/>
<dbReference type="KEGG" id="dre:100000326"/>
<dbReference type="AGR" id="ZFIN:ZDB-GENE-040724-141"/>
<dbReference type="CTD" id="51184"/>
<dbReference type="ZFIN" id="ZDB-GENE-040724-141">
    <property type="gene designation" value="gpn3"/>
</dbReference>
<dbReference type="eggNOG" id="KOG1534">
    <property type="taxonomic scope" value="Eukaryota"/>
</dbReference>
<dbReference type="InParanoid" id="Q6ZM63"/>
<dbReference type="OrthoDB" id="5839at2759"/>
<dbReference type="PhylomeDB" id="Q6ZM63"/>
<dbReference type="TreeFam" id="TF105810"/>
<dbReference type="PRO" id="PR:Q6ZM63"/>
<dbReference type="Proteomes" id="UP000000437">
    <property type="component" value="Chromosome 21"/>
</dbReference>
<dbReference type="GO" id="GO:0005525">
    <property type="term" value="F:GTP binding"/>
    <property type="evidence" value="ECO:0007669"/>
    <property type="project" value="UniProtKB-KW"/>
</dbReference>
<dbReference type="GO" id="GO:0003924">
    <property type="term" value="F:GTPase activity"/>
    <property type="evidence" value="ECO:0000318"/>
    <property type="project" value="GO_Central"/>
</dbReference>
<dbReference type="CDD" id="cd17872">
    <property type="entry name" value="GPN3"/>
    <property type="match status" value="1"/>
</dbReference>
<dbReference type="FunFam" id="3.40.50.300:FF:000616">
    <property type="entry name" value="GPN-loop GTPase 3"/>
    <property type="match status" value="1"/>
</dbReference>
<dbReference type="Gene3D" id="3.40.50.300">
    <property type="entry name" value="P-loop containing nucleotide triphosphate hydrolases"/>
    <property type="match status" value="1"/>
</dbReference>
<dbReference type="InterPro" id="IPR004130">
    <property type="entry name" value="Gpn"/>
</dbReference>
<dbReference type="InterPro" id="IPR030228">
    <property type="entry name" value="Gpn3"/>
</dbReference>
<dbReference type="InterPro" id="IPR027417">
    <property type="entry name" value="P-loop_NTPase"/>
</dbReference>
<dbReference type="PANTHER" id="PTHR21231:SF7">
    <property type="entry name" value="GPN-LOOP GTPASE 3"/>
    <property type="match status" value="1"/>
</dbReference>
<dbReference type="PANTHER" id="PTHR21231">
    <property type="entry name" value="XPA-BINDING PROTEIN 1-RELATED"/>
    <property type="match status" value="1"/>
</dbReference>
<dbReference type="Pfam" id="PF03029">
    <property type="entry name" value="ATP_bind_1"/>
    <property type="match status" value="1"/>
</dbReference>
<dbReference type="SUPFAM" id="SSF52540">
    <property type="entry name" value="P-loop containing nucleoside triphosphate hydrolases"/>
    <property type="match status" value="1"/>
</dbReference>
<name>GPN3_DANRE</name>